<protein>
    <recommendedName>
        <fullName>C-phycoerythrin alpha chain</fullName>
    </recommendedName>
</protein>
<organism>
    <name type="scientific">Microchaete diplosiphon</name>
    <name type="common">Fremyella diplosiphon</name>
    <dbReference type="NCBI Taxonomy" id="1197"/>
    <lineage>
        <taxon>Bacteria</taxon>
        <taxon>Bacillati</taxon>
        <taxon>Cyanobacteriota</taxon>
        <taxon>Cyanophyceae</taxon>
        <taxon>Nostocales</taxon>
        <taxon>Rivulariaceae</taxon>
        <taxon>Microchaete</taxon>
    </lineage>
</organism>
<dbReference type="EMBL" id="X04592">
    <property type="protein sequence ID" value="CAA28261.1"/>
    <property type="molecule type" value="Genomic_DNA"/>
</dbReference>
<dbReference type="SMR" id="P05098"/>
<dbReference type="GO" id="GO:0030089">
    <property type="term" value="C:phycobilisome"/>
    <property type="evidence" value="ECO:0007669"/>
    <property type="project" value="UniProtKB-KW"/>
</dbReference>
<dbReference type="GO" id="GO:0031676">
    <property type="term" value="C:plasma membrane-derived thylakoid membrane"/>
    <property type="evidence" value="ECO:0007669"/>
    <property type="project" value="UniProtKB-SubCell"/>
</dbReference>
<dbReference type="GO" id="GO:0015979">
    <property type="term" value="P:photosynthesis"/>
    <property type="evidence" value="ECO:0007669"/>
    <property type="project" value="UniProtKB-KW"/>
</dbReference>
<dbReference type="Gene3D" id="1.10.490.20">
    <property type="entry name" value="Phycocyanins"/>
    <property type="match status" value="1"/>
</dbReference>
<dbReference type="InterPro" id="IPR009050">
    <property type="entry name" value="Globin-like_sf"/>
</dbReference>
<dbReference type="InterPro" id="IPR012128">
    <property type="entry name" value="Phycobilisome_asu/bsu"/>
</dbReference>
<dbReference type="InterPro" id="IPR038719">
    <property type="entry name" value="Phycobilisome_asu/bsu_sf"/>
</dbReference>
<dbReference type="PANTHER" id="PTHR34011:SF4">
    <property type="entry name" value="C-PHYCOCYANIN ALPHA SUBUNIT"/>
    <property type="match status" value="1"/>
</dbReference>
<dbReference type="PANTHER" id="PTHR34011">
    <property type="entry name" value="PHYCOBILISOME 32.1 KDA LINKER POLYPEPTIDE, PHYCOCYANIN-ASSOCIATED, ROD 2-RELATED"/>
    <property type="match status" value="1"/>
</dbReference>
<dbReference type="Pfam" id="PF00502">
    <property type="entry name" value="Phycobilisome"/>
    <property type="match status" value="1"/>
</dbReference>
<dbReference type="PIRSF" id="PIRSF000081">
    <property type="entry name" value="Phycocyanin"/>
    <property type="match status" value="1"/>
</dbReference>
<dbReference type="SUPFAM" id="SSF46458">
    <property type="entry name" value="Globin-like"/>
    <property type="match status" value="1"/>
</dbReference>
<feature type="chain" id="PRO_0000199173" description="C-phycoerythrin alpha chain">
    <location>
        <begin position="1"/>
        <end position="164"/>
    </location>
</feature>
<feature type="binding site" description="covalent">
    <location>
        <position position="82"/>
    </location>
    <ligand>
        <name>(2R,3E)-phycoerythrobilin</name>
        <dbReference type="ChEBI" id="CHEBI:85276"/>
        <label>1</label>
    </ligand>
</feature>
<feature type="binding site" description="covalent">
    <location>
        <position position="139"/>
    </location>
    <ligand>
        <name>(2R,3E)-phycoerythrobilin</name>
        <dbReference type="ChEBI" id="CHEBI:85276"/>
        <label>2</label>
    </ligand>
</feature>
<proteinExistence type="evidence at protein level"/>
<comment type="function">
    <text>Light-harvesting photosynthetic bile pigment-protein from the phycobiliprotein complex.</text>
</comment>
<comment type="subunit">
    <text>Heterodimer of an alpha and a beta chain.</text>
</comment>
<comment type="subcellular location">
    <subcellularLocation>
        <location>Cellular thylakoid membrane</location>
        <topology>Peripheral membrane protein</topology>
        <orientation>Cytoplasmic side</orientation>
    </subcellularLocation>
    <text>Forms the periphery of the phycobilisome rod.</text>
</comment>
<comment type="induction">
    <text>By green light but not by red light.</text>
</comment>
<comment type="PTM">
    <text>Contains two covalently linked bilin chromophores.</text>
</comment>
<comment type="similarity">
    <text evidence="1">Belongs to the phycobiliprotein family.</text>
</comment>
<sequence>MKSVVTTVIAAADAAGRFPSTSDLESVQGSIQRAAARLEAAEKLANNIDAVATEAYNACIKKYPYLNNSGEANSTDTFKAKCARDIKHYLRLIQYSLVVGGTGPLDEWGIAGQREVYRALGLPTAPYVEALSFARNRGCAPRDMSAQALTEYNALLDYAINSLS</sequence>
<accession>P05098</accession>
<evidence type="ECO:0000305" key="1"/>
<reference key="1">
    <citation type="journal article" date="1986" name="Nucleic Acids Res.">
        <title>Green light induces transcription of the phycoerythrin operon in the cyanobacterium Calothrix 7601.</title>
        <authorList>
            <person name="Mazel D."/>
            <person name="Guglielmi G."/>
            <person name="Houmard J."/>
            <person name="Sidler W."/>
            <person name="Bryant D.A."/>
            <person name="Tandeau de Marsac N."/>
        </authorList>
    </citation>
    <scope>NUCLEOTIDE SEQUENCE [GENOMIC DNA]</scope>
</reference>
<reference key="2">
    <citation type="journal article" date="1986" name="Biol. Chem. Hoppe-Seyler">
        <title>The complete amino-acid sequence of C-phycoerythrin from the cyanobacterium Fremyella diplosiphon.</title>
        <authorList>
            <person name="Sidler W."/>
            <person name="Kumpf B."/>
            <person name="Ruediger W."/>
            <person name="Zuber H."/>
        </authorList>
    </citation>
    <scope>PROTEIN SEQUENCE</scope>
    <scope>CHROMOPHORE BINDING AT CYS-82 AND CYS-139</scope>
</reference>
<gene>
    <name type="primary">cpeA</name>
</gene>
<name>PHEA_MICDP</name>
<keyword id="KW-0042">Antenna complex</keyword>
<keyword id="KW-0089">Bile pigment</keyword>
<keyword id="KW-0157">Chromophore</keyword>
<keyword id="KW-0903">Direct protein sequencing</keyword>
<keyword id="KW-0249">Electron transport</keyword>
<keyword id="KW-0472">Membrane</keyword>
<keyword id="KW-0602">Photosynthesis</keyword>
<keyword id="KW-0605">Phycobilisome</keyword>
<keyword id="KW-0793">Thylakoid</keyword>
<keyword id="KW-0813">Transport</keyword>